<keyword id="KW-0067">ATP-binding</keyword>
<keyword id="KW-0158">Chromosome</keyword>
<keyword id="KW-0175">Coiled coil</keyword>
<keyword id="KW-0226">DNA condensation</keyword>
<keyword id="KW-0547">Nucleotide-binding</keyword>
<keyword id="KW-0539">Nucleus</keyword>
<keyword id="KW-1185">Reference proteome</keyword>
<name>DPY27_CAEEL</name>
<proteinExistence type="evidence at protein level"/>
<feature type="chain" id="PRO_0000119023" description="Chromosome condensation protein dpy-27">
    <location>
        <begin position="1"/>
        <end position="1469"/>
    </location>
</feature>
<feature type="domain" description="SMC hinge">
    <location>
        <begin position="621"/>
        <end position="736"/>
    </location>
</feature>
<feature type="region of interest" description="Disordered" evidence="2">
    <location>
        <begin position="1"/>
        <end position="25"/>
    </location>
</feature>
<feature type="region of interest" description="Disordered" evidence="2">
    <location>
        <begin position="758"/>
        <end position="781"/>
    </location>
</feature>
<feature type="region of interest" description="Disordered" evidence="2">
    <location>
        <begin position="1404"/>
        <end position="1469"/>
    </location>
</feature>
<feature type="coiled-coil region" evidence="1">
    <location>
        <begin position="356"/>
        <end position="542"/>
    </location>
</feature>
<feature type="coiled-coil region" evidence="1">
    <location>
        <begin position="805"/>
        <end position="974"/>
    </location>
</feature>
<feature type="coiled-coil region" evidence="1">
    <location>
        <begin position="1016"/>
        <end position="1056"/>
    </location>
</feature>
<feature type="coiled-coil region" evidence="1">
    <location>
        <begin position="1159"/>
        <end position="1182"/>
    </location>
</feature>
<feature type="compositionally biased region" description="Basic and acidic residues" evidence="2">
    <location>
        <begin position="9"/>
        <end position="18"/>
    </location>
</feature>
<feature type="compositionally biased region" description="Acidic residues" evidence="2">
    <location>
        <begin position="1439"/>
        <end position="1449"/>
    </location>
</feature>
<feature type="binding site" evidence="1">
    <location>
        <begin position="122"/>
        <end position="129"/>
    </location>
    <ligand>
        <name>ATP</name>
        <dbReference type="ChEBI" id="CHEBI:30616"/>
    </ligand>
</feature>
<feature type="mutagenesis site" description="Loss of function." evidence="15">
    <original>K</original>
    <variation>E</variation>
    <variation>I</variation>
    <location>
        <position position="128"/>
    </location>
</feature>
<dbReference type="EMBL" id="L35274">
    <property type="protein sequence ID" value="AAA62647.1"/>
    <property type="molecule type" value="Genomic_DNA"/>
</dbReference>
<dbReference type="EMBL" id="Z35602">
    <property type="protein sequence ID" value="CAA84669.1"/>
    <property type="molecule type" value="Genomic_DNA"/>
</dbReference>
<dbReference type="PIR" id="T24216">
    <property type="entry name" value="T24216"/>
</dbReference>
<dbReference type="RefSeq" id="NP_497771.1">
    <property type="nucleotide sequence ID" value="NM_065370.7"/>
</dbReference>
<dbReference type="SMR" id="P48996"/>
<dbReference type="BioGRID" id="40730">
    <property type="interactions" value="11"/>
</dbReference>
<dbReference type="ComplexPortal" id="CPX-1273">
    <property type="entry name" value="Condensin I-like dosage compensation complex"/>
</dbReference>
<dbReference type="FunCoup" id="P48996">
    <property type="interactions" value="898"/>
</dbReference>
<dbReference type="IntAct" id="P48996">
    <property type="interactions" value="4"/>
</dbReference>
<dbReference type="STRING" id="6239.R13G10.1.1"/>
<dbReference type="iPTMnet" id="P48996"/>
<dbReference type="PaxDb" id="6239-R13G10.1"/>
<dbReference type="PeptideAtlas" id="P48996"/>
<dbReference type="EnsemblMetazoa" id="R13G10.1.1">
    <property type="protein sequence ID" value="R13G10.1.1"/>
    <property type="gene ID" value="WBGene00001086"/>
</dbReference>
<dbReference type="GeneID" id="175492"/>
<dbReference type="KEGG" id="cel:CELE_R13G10.1"/>
<dbReference type="UCSC" id="R13G10.1">
    <property type="organism name" value="c. elegans"/>
</dbReference>
<dbReference type="AGR" id="WB:WBGene00001086"/>
<dbReference type="CTD" id="175492"/>
<dbReference type="WormBase" id="R13G10.1">
    <property type="protein sequence ID" value="CE01052"/>
    <property type="gene ID" value="WBGene00001086"/>
    <property type="gene designation" value="dpy-27"/>
</dbReference>
<dbReference type="eggNOG" id="KOG0996">
    <property type="taxonomic scope" value="Eukaryota"/>
</dbReference>
<dbReference type="GeneTree" id="ENSGT00900000141094"/>
<dbReference type="HOGENOM" id="CLU_001042_4_1_1"/>
<dbReference type="InParanoid" id="P48996"/>
<dbReference type="OMA" id="CITRTIN"/>
<dbReference type="OrthoDB" id="5575062at2759"/>
<dbReference type="PhylomeDB" id="P48996"/>
<dbReference type="PRO" id="PR:P48996"/>
<dbReference type="Proteomes" id="UP000001940">
    <property type="component" value="Chromosome III"/>
</dbReference>
<dbReference type="Bgee" id="WBGene00001086">
    <property type="expression patterns" value="Expressed in pharyngeal muscle cell (C elegans) and 3 other cell types or tissues"/>
</dbReference>
<dbReference type="GO" id="GO:0000796">
    <property type="term" value="C:condensin complex"/>
    <property type="evidence" value="ECO:0000318"/>
    <property type="project" value="GO_Central"/>
</dbReference>
<dbReference type="GO" id="GO:0046536">
    <property type="term" value="C:dosage compensation complex"/>
    <property type="evidence" value="ECO:0000353"/>
    <property type="project" value="WormBase"/>
</dbReference>
<dbReference type="GO" id="GO:0000228">
    <property type="term" value="C:nuclear chromosome"/>
    <property type="evidence" value="ECO:0000314"/>
    <property type="project" value="WormBase"/>
</dbReference>
<dbReference type="GO" id="GO:0005634">
    <property type="term" value="C:nucleus"/>
    <property type="evidence" value="ECO:0000314"/>
    <property type="project" value="WormBase"/>
</dbReference>
<dbReference type="GO" id="GO:0000805">
    <property type="term" value="C:X chromosome"/>
    <property type="evidence" value="ECO:0000314"/>
    <property type="project" value="WormBase"/>
</dbReference>
<dbReference type="GO" id="GO:0005524">
    <property type="term" value="F:ATP binding"/>
    <property type="evidence" value="ECO:0007669"/>
    <property type="project" value="UniProtKB-KW"/>
</dbReference>
<dbReference type="GO" id="GO:0016887">
    <property type="term" value="F:ATP hydrolysis activity"/>
    <property type="evidence" value="ECO:0007669"/>
    <property type="project" value="InterPro"/>
</dbReference>
<dbReference type="GO" id="GO:0043565">
    <property type="term" value="F:sequence-specific DNA binding"/>
    <property type="evidence" value="ECO:0000314"/>
    <property type="project" value="WormBase"/>
</dbReference>
<dbReference type="GO" id="GO:0042464">
    <property type="term" value="P:dosage compensation by hypoactivation of X chromosome"/>
    <property type="evidence" value="ECO:0000315"/>
    <property type="project" value="WormBase"/>
</dbReference>
<dbReference type="GO" id="GO:0007076">
    <property type="term" value="P:mitotic chromosome condensation"/>
    <property type="evidence" value="ECO:0000318"/>
    <property type="project" value="GO_Central"/>
</dbReference>
<dbReference type="GO" id="GO:0010629">
    <property type="term" value="P:negative regulation of gene expression"/>
    <property type="evidence" value="ECO:0000303"/>
    <property type="project" value="ComplexPortal"/>
</dbReference>
<dbReference type="FunFam" id="1.20.1060.20:FF:000021">
    <property type="match status" value="1"/>
</dbReference>
<dbReference type="Gene3D" id="1.20.1060.20">
    <property type="match status" value="1"/>
</dbReference>
<dbReference type="Gene3D" id="3.30.70.1620">
    <property type="match status" value="1"/>
</dbReference>
<dbReference type="Gene3D" id="3.40.50.300">
    <property type="entry name" value="P-loop containing nucleotide triphosphate hydrolases"/>
    <property type="match status" value="2"/>
</dbReference>
<dbReference type="InterPro" id="IPR027417">
    <property type="entry name" value="P-loop_NTPase"/>
</dbReference>
<dbReference type="InterPro" id="IPR003395">
    <property type="entry name" value="RecF/RecN/SMC_N"/>
</dbReference>
<dbReference type="InterPro" id="IPR024704">
    <property type="entry name" value="SMC"/>
</dbReference>
<dbReference type="InterPro" id="IPR010935">
    <property type="entry name" value="SMC_hinge"/>
</dbReference>
<dbReference type="InterPro" id="IPR036277">
    <property type="entry name" value="SMC_hinge_sf"/>
</dbReference>
<dbReference type="PANTHER" id="PTHR18937:SF172">
    <property type="entry name" value="STRUCTURAL MAINTENANCE OF CHROMOSOMES PROTEIN"/>
    <property type="match status" value="1"/>
</dbReference>
<dbReference type="PANTHER" id="PTHR18937">
    <property type="entry name" value="STRUCTURAL MAINTENANCE OF CHROMOSOMES SMC FAMILY MEMBER"/>
    <property type="match status" value="1"/>
</dbReference>
<dbReference type="Pfam" id="PF06470">
    <property type="entry name" value="SMC_hinge"/>
    <property type="match status" value="1"/>
</dbReference>
<dbReference type="Pfam" id="PF02463">
    <property type="entry name" value="SMC_N"/>
    <property type="match status" value="2"/>
</dbReference>
<dbReference type="PIRSF" id="PIRSF005719">
    <property type="entry name" value="SMC"/>
    <property type="match status" value="1"/>
</dbReference>
<dbReference type="SMART" id="SM00968">
    <property type="entry name" value="SMC_hinge"/>
    <property type="match status" value="1"/>
</dbReference>
<dbReference type="SUPFAM" id="SSF52540">
    <property type="entry name" value="P-loop containing nucleoside triphosphate hydrolases"/>
    <property type="match status" value="1"/>
</dbReference>
<dbReference type="SUPFAM" id="SSF75553">
    <property type="entry name" value="Smc hinge domain"/>
    <property type="match status" value="1"/>
</dbReference>
<reference key="1">
    <citation type="journal article" date="1994" name="Cell">
        <title>DPY-27: a chromosome condensation protein homolog that regulates C. elegans dosage compensation through association with the X chromosome.</title>
        <authorList>
            <person name="Chuang P.-T."/>
            <person name="Albertson D.G."/>
            <person name="Meyer B.J."/>
        </authorList>
    </citation>
    <scope>NUCLEOTIDE SEQUENCE [GENOMIC DNA]</scope>
    <scope>FUNCTION</scope>
    <scope>SUBCELLULAR LOCATION</scope>
    <scope>DEVELOPMENTAL STAGE</scope>
    <scope>MUTAGENESIS OF LYS-128</scope>
    <source>
        <strain>Bristol N2</strain>
    </source>
</reference>
<reference key="2">
    <citation type="journal article" date="1998" name="Science">
        <title>Genome sequence of the nematode C. elegans: a platform for investigating biology.</title>
        <authorList>
            <consortium name="The C. elegans sequencing consortium"/>
        </authorList>
    </citation>
    <scope>NUCLEOTIDE SEQUENCE [LARGE SCALE GENOMIC DNA]</scope>
    <source>
        <strain>Bristol N2</strain>
    </source>
</reference>
<reference key="3">
    <citation type="journal article" date="1986" name="Cell">
        <title>Caenorhabditis elegans compensates for the difference in X chromosome dosage between the sexes by regulating transcript levels.</title>
        <authorList>
            <person name="Meyer B.J."/>
            <person name="Casson L.P."/>
        </authorList>
    </citation>
    <scope>FUNCTION</scope>
</reference>
<reference key="4">
    <citation type="journal article" date="1998" name="Cell">
        <title>MIX-1: an essential component of the C. elegans mitotic machinery executes X chromosome dosage compensation.</title>
        <authorList>
            <person name="Lieb J.D."/>
            <person name="Albrecht M.R."/>
            <person name="Chuang P.-T."/>
            <person name="Meyer B.J."/>
        </authorList>
    </citation>
    <scope>FUNCTION</scope>
    <scope>INTERACTION WITH MIX-1</scope>
</reference>
<reference key="5">
    <citation type="journal article" date="1996" name="Science">
        <title>Sex-specific assembly of a dosage compensation complex on the nematode X chromosome.</title>
        <authorList>
            <person name="Chuang P.-T."/>
            <person name="Lieb J.D."/>
            <person name="Meyer B.J."/>
        </authorList>
    </citation>
    <scope>FUNCTION</scope>
    <scope>IDENTIFICATION IN A COMPLEX WITH DPY-26</scope>
    <scope>SUBCELLULAR LOCATION</scope>
</reference>
<reference key="6">
    <citation type="journal article" date="2002" name="Genes Dev.">
        <title>A molecular link between gene-specific and chromosome-wide transcriptional repression.</title>
        <authorList>
            <person name="Chu D.S."/>
            <person name="Dawes H.E."/>
            <person name="Lieb J.D."/>
            <person name="Chan R.C."/>
            <person name="Kuo A.F."/>
            <person name="Meyer B.J."/>
        </authorList>
    </citation>
    <scope>FUNCTION</scope>
</reference>
<reference key="7">
    <citation type="journal article" date="2003" name="Development">
        <title>Recruitment of C. elegans dosage compensation proteins for gene-specific versus chromosome-wide repression.</title>
        <authorList>
            <person name="Yonker S.A."/>
            <person name="Meyer B.J."/>
        </authorList>
    </citation>
    <scope>FUNCTION</scope>
    <scope>INTERACTION WITH DPY-21</scope>
    <scope>SUBCELLULAR LOCATION</scope>
    <scope>DEVELOPMENTAL STAGE</scope>
</reference>
<reference key="8">
    <citation type="journal article" date="2004" name="J. Cell Biol.">
        <title>Condensin restructures chromosomes in preparation for meiotic divisions.</title>
        <authorList>
            <person name="Chan R.C."/>
            <person name="Severson A.F."/>
            <person name="Meyer B.J."/>
        </authorList>
    </citation>
    <scope>IDENTIFICATION IN A DOSAGE COMPENSATION COMPLEX</scope>
    <scope>INTERACTION WITH DPY-28 AND MIX-1</scope>
</reference>
<reference key="9">
    <citation type="journal article" date="2008" name="Genes Dev.">
        <title>Meiotic crossover number and distribution are regulated by a dosage compensation protein that resembles a condensin subunit.</title>
        <authorList>
            <person name="Tsai C.J."/>
            <person name="Mets D.G."/>
            <person name="Albrecht M.R."/>
            <person name="Nix P."/>
            <person name="Chan A."/>
            <person name="Meyer B.J."/>
        </authorList>
    </citation>
    <scope>FUNCTION</scope>
    <scope>IDENTIFICATION IN A DOSAGE COMPENSATION COMPLEX</scope>
    <scope>INTERACTION WITH DPY-26; DPY-28 AND MIX-1</scope>
</reference>
<reference key="10">
    <citation type="journal article" date="2009" name="Cell">
        <title>Condensins regulate meiotic DNA break distribution, thus crossover frequency, by controlling chromosome structure.</title>
        <authorList>
            <person name="Mets D.G."/>
            <person name="Meyer B.J."/>
        </authorList>
    </citation>
    <scope>IDENTIFICATION IN A DOSAGE COMPENSATION COMPLEX</scope>
    <scope>INTERACTION WITH DPY-26</scope>
</reference>
<reference key="11">
    <citation type="journal article" date="2009" name="Curr. Biol.">
        <title>Three distinct condensin complexes control C. elegans chromosome dynamics.</title>
        <authorList>
            <person name="Csankovszki G."/>
            <person name="Collette K."/>
            <person name="Spahl K."/>
            <person name="Carey J."/>
            <person name="Snyder M."/>
            <person name="Petty E."/>
            <person name="Patel U."/>
            <person name="Tabuchi T."/>
            <person name="Liu H."/>
            <person name="McLeod I."/>
            <person name="Thompson J."/>
            <person name="Sarkeshik A."/>
            <person name="Sarkesik A."/>
            <person name="Yates J."/>
            <person name="Meyer B.J."/>
            <person name="Hagstrom K."/>
        </authorList>
    </citation>
    <scope>FUNCTION</scope>
    <scope>IDENTIFICATION IN A DOSAGE COMPENSATION COMPLEX</scope>
    <scope>INTERACTION WITH MIX-1; DPY-28; DPY-26 AND CAPG-1</scope>
    <scope>SUBCELLULAR LOCATION</scope>
    <scope>DISRUPTION PHENOTYPE</scope>
</reference>
<reference key="12">
    <citation type="journal article" date="2012" name="Mol. Cell. Biol.">
        <title>Caenorhabditis elegans dosage compensation regulates histone H4 chromatin state on X chromosomes.</title>
        <authorList>
            <person name="Wells M.B."/>
            <person name="Snyder M.J."/>
            <person name="Custer L.M."/>
            <person name="Csankovszki G."/>
        </authorList>
    </citation>
    <scope>FUNCTION</scope>
    <scope>DISRUPTION PHENOTYPE</scope>
</reference>
<reference key="13">
    <citation type="journal article" date="2012" name="PLoS Genet.">
        <title>H4K20me1 contributes to downregulation of X-linked genes for C. elegans dosage compensation.</title>
        <authorList>
            <person name="Vielle A."/>
            <person name="Lang J."/>
            <person name="Dong Y."/>
            <person name="Ercan S."/>
            <person name="Kotwaliwale C."/>
            <person name="Rechtsteiner A."/>
            <person name="Appert A."/>
            <person name="Chen Q.B."/>
            <person name="Dose A."/>
            <person name="Egelhofer T."/>
            <person name="Kimura H."/>
            <person name="Stempor P."/>
            <person name="Dernburg A."/>
            <person name="Lieb J.D."/>
            <person name="Strome S."/>
            <person name="Ahringer J."/>
        </authorList>
    </citation>
    <scope>SUBCELLULAR LOCATION</scope>
</reference>
<reference key="14">
    <citation type="journal article" date="2013" name="Development">
        <title>A non-canonical role for the C. elegans dosage compensation complex in growth and metabolic regulation downstream of TOR complex 2.</title>
        <authorList>
            <person name="Webster C.M."/>
            <person name="Wu L."/>
            <person name="Douglas D."/>
            <person name="Soukas A.A."/>
        </authorList>
    </citation>
    <scope>FUNCTION</scope>
    <scope>DISRUPTION PHENOTYPE</scope>
</reference>
<reference key="15">
    <citation type="journal article" date="2015" name="PLoS Genet.">
        <title>Developmental dynamics of X-chromosome dosage compensation by the DCC and H4K20me1 in C. elegans.</title>
        <authorList>
            <person name="Kramer M."/>
            <person name="Kranz A.L."/>
            <person name="Su A."/>
            <person name="Winterkorn L.H."/>
            <person name="Albritton S.E."/>
            <person name="Ercan S."/>
        </authorList>
    </citation>
    <scope>FUNCTION</scope>
    <scope>DISRUPTION PHENOTYPE</scope>
</reference>
<reference key="16">
    <citation type="journal article" date="2017" name="PLoS Genet.">
        <title>An SMC-like protein binds and regulates Caenorhabditis elegans condensins.</title>
        <authorList>
            <person name="Chao L.F."/>
            <person name="Singh M."/>
            <person name="Thompson J."/>
            <person name="Yates J.R. III"/>
            <person name="Hagstrom K.A."/>
        </authorList>
    </citation>
    <scope>INTERACTION WITH SMCL-1; MIX-1; DPY-26; DPY-28 AND CAPG-1</scope>
    <scope>IDENTIFICATION BY MASS SPECTROMETRY</scope>
</reference>
<accession>P48996</accession>
<protein>
    <recommendedName>
        <fullName>Chromosome condensation protein dpy-27</fullName>
    </recommendedName>
    <alternativeName>
        <fullName>Protein dumpy-27</fullName>
    </alternativeName>
</protein>
<gene>
    <name type="primary">dpy-27</name>
    <name type="ORF">R13G10.1</name>
</gene>
<organism>
    <name type="scientific">Caenorhabditis elegans</name>
    <dbReference type="NCBI Taxonomy" id="6239"/>
    <lineage>
        <taxon>Eukaryota</taxon>
        <taxon>Metazoa</taxon>
        <taxon>Ecdysozoa</taxon>
        <taxon>Nematoda</taxon>
        <taxon>Chromadorea</taxon>
        <taxon>Rhabditida</taxon>
        <taxon>Rhabditina</taxon>
        <taxon>Rhabditomorpha</taxon>
        <taxon>Rhabditoidea</taxon>
        <taxon>Rhabditidae</taxon>
        <taxon>Peloderinae</taxon>
        <taxon>Caenorhabditis</taxon>
    </lineage>
</organism>
<comment type="function">
    <text evidence="3 4 6 7 9 11 12 14 15 16 17">Central component of the condensin I-like dosage compensation complex that associates specifically with hermaphrodite X chromosomes to reduce their gene transcription throughout development (PubMed:14660541, PubMed:19119011, PubMed:22393255, PubMed:26641248, PubMed:3779843, PubMed:7954812, PubMed:8939870). Its strong similarity with the condensin subunit smc4 suggests that it may reduce the X-chromosome transcript level by condensing the chromatin structure during interphase (PubMed:8939870). Involved in the recruitment of the dosage compensation proteins mix-1 and dpy-21 to the X chromosome (PubMed:14660541, PubMed:9458050). Might be involved in the reduction of histone H4 lysine 16 acetylation (H4K16ac) on dosage compensated X chromosomes (PubMed:22393255). As a member of the dosage compensation complex, also binds to regulatory regions of the autosomal her-1 gene, required for male development, possibly contributing to its repression in hermaphrodites (PubMed:11937488). Also plays a role in the regulation of growth and body fat metabolism downstream of the TOR complex 2 pathway (PubMed:23884442).</text>
</comment>
<comment type="subunit">
    <text evidence="4 5 6 7 8 13 16 17">Component of the dosage compensation complex, which contains the mix-1/SMC2 and dpy-27/SMC4 heterodimer, and three non SMC subunits that probably regulate the complex: dpy-26, capg-1 and dpy-28 (PubMed:15557118, PubMed:18198337, PubMed:19119011, PubMed:19781752, PubMed:8939870). Within the complex, interacts with dpy-28, mix-1, dpy-26 and capg-1 (PubMed:15557118, PubMed:18198337, PubMed:19119011, PubMed:19781752, PubMed:28301465, PubMed:9458050). Interacts with dpy-21 (PubMed:14660541). Interacts with dpy-28; the interaction is required for dpy-28 protein stability and dpy-28 association with the X chromosome (PubMed:18198337). Interacts with smcl-1 (PubMed:28301465).</text>
</comment>
<comment type="interaction">
    <interactant intactId="EBI-1152153">
        <id>P48996</id>
    </interactant>
    <interactant intactId="EBI-1152136">
        <id>Q09591</id>
        <label>mix-1</label>
    </interactant>
    <organismsDiffer>false</organismsDiffer>
    <experiments>5</experiments>
</comment>
<comment type="subcellular location">
    <subcellularLocation>
        <location evidence="4 7 10 15 16">Nucleus</location>
    </subcellularLocation>
    <subcellularLocation>
        <location evidence="7 10 15 16">Chromosome</location>
    </subcellularLocation>
    <text evidence="4 7 10 15 16">In interphase cells, diffusely distributed in nuclei before the onset of dosage compensation (PubMed:19119011). Associates with chromatin after the 30-cell stage when dosage compensation is initiated (PubMed:19119011, PubMed:23028348, PubMed:7954812). Specifically localizes to the X chromosomes of hermaphrodite (XX) embryos, but remains diffusely distributed throughout the nuclei of male (XO) embryos (PubMed:23028348, PubMed:7954812). dpy-26 is required for its X chromosome specific association (PubMed:8939870).</text>
</comment>
<comment type="developmental stage">
    <text evidence="4 15">Expressed in embryos and early-staged larvae (PubMed:7954812). Also expressed in adult gut nuclei (PubMed:14660541).</text>
</comment>
<comment type="domain">
    <text evidence="18">Consists of two putative central coiled-coil regions flanked by putative globular regions at the N- and C-termini.</text>
</comment>
<comment type="disruption phenotype">
    <text evidence="7 9 11 12">RNAi-mediated knockdown causes derepression of X chromosome linked genes in embryos and in larval stages L1 and L3 (PubMed:26641248). Leads to an increase of 'Lys-16' acetylation of histone H4 (H4K16ac) on hermaphrodite X chromosomes (PubMed:22393255). In the TOR complex 2 mutant background rict-1, suppresses the growth delay and elevated body fat index (PubMed:23884442). In a sex-1 mutant background, leads to high XX-specific embryonic lethality (PubMed:19119011).</text>
</comment>
<comment type="similarity">
    <text evidence="19">Belongs to the SMC family. SMC4 subfamily.</text>
</comment>
<evidence type="ECO:0000255" key="1"/>
<evidence type="ECO:0000256" key="2">
    <source>
        <dbReference type="SAM" id="MobiDB-lite"/>
    </source>
</evidence>
<evidence type="ECO:0000269" key="3">
    <source>
    </source>
</evidence>
<evidence type="ECO:0000269" key="4">
    <source>
    </source>
</evidence>
<evidence type="ECO:0000269" key="5">
    <source>
    </source>
</evidence>
<evidence type="ECO:0000269" key="6">
    <source>
    </source>
</evidence>
<evidence type="ECO:0000269" key="7">
    <source>
    </source>
</evidence>
<evidence type="ECO:0000269" key="8">
    <source>
    </source>
</evidence>
<evidence type="ECO:0000269" key="9">
    <source>
    </source>
</evidence>
<evidence type="ECO:0000269" key="10">
    <source>
    </source>
</evidence>
<evidence type="ECO:0000269" key="11">
    <source>
    </source>
</evidence>
<evidence type="ECO:0000269" key="12">
    <source>
    </source>
</evidence>
<evidence type="ECO:0000269" key="13">
    <source>
    </source>
</evidence>
<evidence type="ECO:0000269" key="14">
    <source>
    </source>
</evidence>
<evidence type="ECO:0000269" key="15">
    <source>
    </source>
</evidence>
<evidence type="ECO:0000269" key="16">
    <source>
    </source>
</evidence>
<evidence type="ECO:0000269" key="17">
    <source>
    </source>
</evidence>
<evidence type="ECO:0000303" key="18">
    <source>
    </source>
</evidence>
<evidence type="ECO:0000305" key="19"/>
<sequence length="1469" mass="169619">MQPFKRRALTSDDDRPYADTDSMPEVDLDVDRRRQYMEQLNIFDDVSSGAYMLELEAAENGVKYDEKEDLLNVQIPPKYEDQISDPDGNRMIILNIYVENFKSYAGKHILGPFHKNLTMILGPNGSGKSNVIDALLFVFGFKAGKIRTKKLSALINSGGNYESCSVTIMFQMVKDMPVENYDKYEVLTDNCVCITRTINRENNSKYRIDDKDASQKDVQELLLRAGIDMTHNRFLILQGEVEAIALMKPTSKNPNEEGMLEYIEDIVGTNRFVAPISKLMHRVSLLEHKSSQYGASVRRHEGHLKVFEKAMVIGMAYLNTFNNLNYLRGIRVKHNLCRYAETMRDAKMSLVTRTGELEENKDIMLEAKDEVRKKETHERSLNSIVTELENKRIDWQSKKNDWHARDAKRKQGLKSCTQDLGKLMKERDEARREKFEIETAPENARISKQNMQLEWDQLKEQENVCQRTATENLIKYDQKSSADRAKHDDLEKKLSDELLQSMRAKAELDVSESELKDMTIMMEQGQKRVDELKGTLQTMMAENIRDNTELNAVTTELQDRKLKFDKAVEKLPHLKSTEQLLRSKKYELDQEVIEASNTQEVTYRHQATAKLHELKEAGLFPGFKGRLGDLASIPIKFDTAISTVFFAQLDYHVVQTSDECRIGIGFCHEYKLPRTTFVFLDHLKDTDTSGMDSTMKFPAERLFDKIHCVNPEIRREFYFLIHDILVVDSLEEATRIDKKYPGRHRYCTLNGSILNRSGALTGGGKPTTGRIRNDNNPNMSGVKKVDLSKLRAAQEKHNHALEAHLKLQLKQEEIRADNGPIIKQLEIRKRELIMSTKEQKTRIAELKSSIAAHERRMVNYREVTVEDLDEKRAQIADLKRQVEESQKSSAKIKQQIEQYKRKMDRMFMELVQKNKDSIEQAKDRMGQLEQDIARQTAIIENNPSHLEQAEKKLSELEHMCLEKRSEADALAQLEVGEDVKGIDIINAQLQTSTASIDAQRARYTEAVAARREADAAYQTTVDNYNMVKQTYDELMRIIDDLENKTMADNAELDIIESAWMQPEKLYPPGKFVRYNDPDIAAKMTDGHVVLPYECISMIEPHREAYEEHEARMLEDDVFEDTANKICKLEKDVDKFRREFDNKGVRDYAMIVSLLMNEVTSAKKFSDKLKAHREKLNELRMARFNEFSEALAFLGTTTQMLYQLITNGGDASLKFVEEGKSTDPFDGGIKFSVRPAKKSWKLIENLSGGEKTLASLCFVFAMHHYRPTPLYVMDEIDAALDLNNVSLIANYIKHSERTRNAQFIIISLRNQMFEVGNRLLGIYKIDGKTYNIMVDPIAVEIKNRPILKIFEEEIKRREKLRRAEIEPEIDLSNGLSNVVIAPKRKQRRLEMLKLSDFGLDDDSDLPEFNRFPPATRRELSVEDSDEDDEPVRRRPRRQVEEEDEEDELIEEATPSPPPIVVQRRVRRSRH</sequence>